<keyword id="KW-0004">4Fe-4S</keyword>
<keyword id="KW-0963">Cytoplasm</keyword>
<keyword id="KW-1015">Disulfide bond</keyword>
<keyword id="KW-0408">Iron</keyword>
<keyword id="KW-0411">Iron-sulfur</keyword>
<keyword id="KW-0479">Metal-binding</keyword>
<keyword id="KW-0489">Methyltransferase</keyword>
<keyword id="KW-0698">rRNA processing</keyword>
<keyword id="KW-0949">S-adenosyl-L-methionine</keyword>
<keyword id="KW-0808">Transferase</keyword>
<keyword id="KW-0819">tRNA processing</keyword>
<feature type="chain" id="PRO_0000350265" description="Probable dual-specificity RNA methyltransferase RlmN">
    <location>
        <begin position="1"/>
        <end position="374"/>
    </location>
</feature>
<feature type="domain" description="Radical SAM core" evidence="2">
    <location>
        <begin position="114"/>
        <end position="361"/>
    </location>
</feature>
<feature type="active site" description="Proton acceptor" evidence="1">
    <location>
        <position position="108"/>
    </location>
</feature>
<feature type="active site" description="S-methylcysteine intermediate" evidence="1">
    <location>
        <position position="367"/>
    </location>
</feature>
<feature type="binding site" evidence="1">
    <location>
        <position position="128"/>
    </location>
    <ligand>
        <name>[4Fe-4S] cluster</name>
        <dbReference type="ChEBI" id="CHEBI:49883"/>
        <note>4Fe-4S-S-AdoMet</note>
    </ligand>
</feature>
<feature type="binding site" evidence="1">
    <location>
        <position position="132"/>
    </location>
    <ligand>
        <name>[4Fe-4S] cluster</name>
        <dbReference type="ChEBI" id="CHEBI:49883"/>
        <note>4Fe-4S-S-AdoMet</note>
    </ligand>
</feature>
<feature type="binding site" evidence="1">
    <location>
        <position position="135"/>
    </location>
    <ligand>
        <name>[4Fe-4S] cluster</name>
        <dbReference type="ChEBI" id="CHEBI:49883"/>
        <note>4Fe-4S-S-AdoMet</note>
    </ligand>
</feature>
<feature type="binding site" evidence="1">
    <location>
        <begin position="188"/>
        <end position="189"/>
    </location>
    <ligand>
        <name>S-adenosyl-L-methionine</name>
        <dbReference type="ChEBI" id="CHEBI:59789"/>
    </ligand>
</feature>
<feature type="binding site" evidence="1">
    <location>
        <position position="222"/>
    </location>
    <ligand>
        <name>S-adenosyl-L-methionine</name>
        <dbReference type="ChEBI" id="CHEBI:59789"/>
    </ligand>
</feature>
<feature type="binding site" evidence="1">
    <location>
        <begin position="245"/>
        <end position="247"/>
    </location>
    <ligand>
        <name>S-adenosyl-L-methionine</name>
        <dbReference type="ChEBI" id="CHEBI:59789"/>
    </ligand>
</feature>
<feature type="binding site" evidence="1">
    <location>
        <position position="324"/>
    </location>
    <ligand>
        <name>S-adenosyl-L-methionine</name>
        <dbReference type="ChEBI" id="CHEBI:59789"/>
    </ligand>
</feature>
<feature type="disulfide bond" description="(transient)" evidence="1">
    <location>
        <begin position="121"/>
        <end position="367"/>
    </location>
</feature>
<accession>A3PXZ7</accession>
<organism>
    <name type="scientific">Mycobacterium sp. (strain JLS)</name>
    <dbReference type="NCBI Taxonomy" id="164757"/>
    <lineage>
        <taxon>Bacteria</taxon>
        <taxon>Bacillati</taxon>
        <taxon>Actinomycetota</taxon>
        <taxon>Actinomycetes</taxon>
        <taxon>Mycobacteriales</taxon>
        <taxon>Mycobacteriaceae</taxon>
        <taxon>Mycobacterium</taxon>
    </lineage>
</organism>
<reference key="1">
    <citation type="submission" date="2007-02" db="EMBL/GenBank/DDBJ databases">
        <title>Complete sequence of Mycobacterium sp. JLS.</title>
        <authorList>
            <consortium name="US DOE Joint Genome Institute"/>
            <person name="Copeland A."/>
            <person name="Lucas S."/>
            <person name="Lapidus A."/>
            <person name="Barry K."/>
            <person name="Detter J.C."/>
            <person name="Glavina del Rio T."/>
            <person name="Hammon N."/>
            <person name="Israni S."/>
            <person name="Dalin E."/>
            <person name="Tice H."/>
            <person name="Pitluck S."/>
            <person name="Chain P."/>
            <person name="Malfatti S."/>
            <person name="Shin M."/>
            <person name="Vergez L."/>
            <person name="Schmutz J."/>
            <person name="Larimer F."/>
            <person name="Land M."/>
            <person name="Hauser L."/>
            <person name="Kyrpides N."/>
            <person name="Mikhailova N."/>
            <person name="Miller C.D."/>
            <person name="Anderson A.J."/>
            <person name="Sims R.C."/>
            <person name="Richardson P."/>
        </authorList>
    </citation>
    <scope>NUCLEOTIDE SEQUENCE [LARGE SCALE GENOMIC DNA]</scope>
    <source>
        <strain>JLS</strain>
    </source>
</reference>
<evidence type="ECO:0000255" key="1">
    <source>
        <dbReference type="HAMAP-Rule" id="MF_01849"/>
    </source>
</evidence>
<evidence type="ECO:0000255" key="2">
    <source>
        <dbReference type="PROSITE-ProRule" id="PRU01266"/>
    </source>
</evidence>
<protein>
    <recommendedName>
        <fullName evidence="1">Probable dual-specificity RNA methyltransferase RlmN</fullName>
        <ecNumber evidence="1">2.1.1.192</ecNumber>
    </recommendedName>
    <alternativeName>
        <fullName evidence="1">23S rRNA (adenine(2503)-C(2))-methyltransferase</fullName>
    </alternativeName>
    <alternativeName>
        <fullName evidence="1">23S rRNA m2A2503 methyltransferase</fullName>
    </alternativeName>
    <alternativeName>
        <fullName evidence="1">Ribosomal RNA large subunit methyltransferase N</fullName>
    </alternativeName>
    <alternativeName>
        <fullName evidence="1">tRNA (adenine(37)-C(2))-methyltransferase</fullName>
    </alternativeName>
    <alternativeName>
        <fullName evidence="1">tRNA m2A37 methyltransferase</fullName>
    </alternativeName>
</protein>
<gene>
    <name evidence="1" type="primary">rlmN</name>
    <name type="ordered locus">Mjls_1987</name>
</gene>
<name>RLMN_MYCSJ</name>
<dbReference type="EC" id="2.1.1.192" evidence="1"/>
<dbReference type="EMBL" id="CP000580">
    <property type="protein sequence ID" value="ABN97774.1"/>
    <property type="molecule type" value="Genomic_DNA"/>
</dbReference>
<dbReference type="SMR" id="A3PXZ7"/>
<dbReference type="KEGG" id="mjl:Mjls_1987"/>
<dbReference type="HOGENOM" id="CLU_029101_0_2_11"/>
<dbReference type="BioCyc" id="MSP164757:G1G8C-2007-MONOMER"/>
<dbReference type="GO" id="GO:0005737">
    <property type="term" value="C:cytoplasm"/>
    <property type="evidence" value="ECO:0007669"/>
    <property type="project" value="UniProtKB-SubCell"/>
</dbReference>
<dbReference type="GO" id="GO:0051539">
    <property type="term" value="F:4 iron, 4 sulfur cluster binding"/>
    <property type="evidence" value="ECO:0007669"/>
    <property type="project" value="UniProtKB-UniRule"/>
</dbReference>
<dbReference type="GO" id="GO:0046872">
    <property type="term" value="F:metal ion binding"/>
    <property type="evidence" value="ECO:0007669"/>
    <property type="project" value="UniProtKB-KW"/>
</dbReference>
<dbReference type="GO" id="GO:0070040">
    <property type="term" value="F:rRNA (adenine(2503)-C2-)-methyltransferase activity"/>
    <property type="evidence" value="ECO:0007669"/>
    <property type="project" value="UniProtKB-UniRule"/>
</dbReference>
<dbReference type="GO" id="GO:0019843">
    <property type="term" value="F:rRNA binding"/>
    <property type="evidence" value="ECO:0007669"/>
    <property type="project" value="UniProtKB-UniRule"/>
</dbReference>
<dbReference type="GO" id="GO:0002935">
    <property type="term" value="F:tRNA (adenine(37)-C2)-methyltransferase activity"/>
    <property type="evidence" value="ECO:0007669"/>
    <property type="project" value="UniProtKB-UniRule"/>
</dbReference>
<dbReference type="GO" id="GO:0000049">
    <property type="term" value="F:tRNA binding"/>
    <property type="evidence" value="ECO:0007669"/>
    <property type="project" value="UniProtKB-UniRule"/>
</dbReference>
<dbReference type="GO" id="GO:0070475">
    <property type="term" value="P:rRNA base methylation"/>
    <property type="evidence" value="ECO:0007669"/>
    <property type="project" value="UniProtKB-UniRule"/>
</dbReference>
<dbReference type="GO" id="GO:0030488">
    <property type="term" value="P:tRNA methylation"/>
    <property type="evidence" value="ECO:0007669"/>
    <property type="project" value="UniProtKB-UniRule"/>
</dbReference>
<dbReference type="CDD" id="cd01335">
    <property type="entry name" value="Radical_SAM"/>
    <property type="match status" value="1"/>
</dbReference>
<dbReference type="FunFam" id="3.20.20.70:FF:000014">
    <property type="entry name" value="Probable dual-specificity RNA methyltransferase RlmN"/>
    <property type="match status" value="1"/>
</dbReference>
<dbReference type="Gene3D" id="1.10.150.530">
    <property type="match status" value="1"/>
</dbReference>
<dbReference type="Gene3D" id="3.20.20.70">
    <property type="entry name" value="Aldolase class I"/>
    <property type="match status" value="1"/>
</dbReference>
<dbReference type="HAMAP" id="MF_01849">
    <property type="entry name" value="RNA_methyltr_RlmN"/>
    <property type="match status" value="1"/>
</dbReference>
<dbReference type="InterPro" id="IPR013785">
    <property type="entry name" value="Aldolase_TIM"/>
</dbReference>
<dbReference type="InterPro" id="IPR040072">
    <property type="entry name" value="Methyltransferase_A"/>
</dbReference>
<dbReference type="InterPro" id="IPR027492">
    <property type="entry name" value="RNA_MTrfase_RlmN"/>
</dbReference>
<dbReference type="InterPro" id="IPR004383">
    <property type="entry name" value="rRNA_lsu_MTrfase_RlmN/Cfr"/>
</dbReference>
<dbReference type="InterPro" id="IPR007197">
    <property type="entry name" value="rSAM"/>
</dbReference>
<dbReference type="NCBIfam" id="TIGR00048">
    <property type="entry name" value="rRNA_mod_RlmN"/>
    <property type="match status" value="1"/>
</dbReference>
<dbReference type="PANTHER" id="PTHR30544">
    <property type="entry name" value="23S RRNA METHYLTRANSFERASE"/>
    <property type="match status" value="1"/>
</dbReference>
<dbReference type="PANTHER" id="PTHR30544:SF5">
    <property type="entry name" value="RADICAL SAM CORE DOMAIN-CONTAINING PROTEIN"/>
    <property type="match status" value="1"/>
</dbReference>
<dbReference type="Pfam" id="PF04055">
    <property type="entry name" value="Radical_SAM"/>
    <property type="match status" value="1"/>
</dbReference>
<dbReference type="PIRSF" id="PIRSF006004">
    <property type="entry name" value="CHP00048"/>
    <property type="match status" value="1"/>
</dbReference>
<dbReference type="SFLD" id="SFLDF00275">
    <property type="entry name" value="adenosine_C2_methyltransferase"/>
    <property type="match status" value="1"/>
</dbReference>
<dbReference type="SFLD" id="SFLDG01062">
    <property type="entry name" value="methyltransferase_(Class_A)"/>
    <property type="match status" value="1"/>
</dbReference>
<dbReference type="SUPFAM" id="SSF102114">
    <property type="entry name" value="Radical SAM enzymes"/>
    <property type="match status" value="1"/>
</dbReference>
<dbReference type="PROSITE" id="PS51918">
    <property type="entry name" value="RADICAL_SAM"/>
    <property type="match status" value="1"/>
</dbReference>
<comment type="function">
    <text evidence="1">Specifically methylates position 2 of adenine 2503 in 23S rRNA and position 2 of adenine 37 in tRNAs.</text>
</comment>
<comment type="catalytic activity">
    <reaction evidence="1">
        <text>adenosine(2503) in 23S rRNA + 2 reduced [2Fe-2S]-[ferredoxin] + 2 S-adenosyl-L-methionine = 2-methyladenosine(2503) in 23S rRNA + 5'-deoxyadenosine + L-methionine + 2 oxidized [2Fe-2S]-[ferredoxin] + S-adenosyl-L-homocysteine</text>
        <dbReference type="Rhea" id="RHEA:42916"/>
        <dbReference type="Rhea" id="RHEA-COMP:10000"/>
        <dbReference type="Rhea" id="RHEA-COMP:10001"/>
        <dbReference type="Rhea" id="RHEA-COMP:10152"/>
        <dbReference type="Rhea" id="RHEA-COMP:10282"/>
        <dbReference type="ChEBI" id="CHEBI:17319"/>
        <dbReference type="ChEBI" id="CHEBI:33737"/>
        <dbReference type="ChEBI" id="CHEBI:33738"/>
        <dbReference type="ChEBI" id="CHEBI:57844"/>
        <dbReference type="ChEBI" id="CHEBI:57856"/>
        <dbReference type="ChEBI" id="CHEBI:59789"/>
        <dbReference type="ChEBI" id="CHEBI:74411"/>
        <dbReference type="ChEBI" id="CHEBI:74497"/>
        <dbReference type="EC" id="2.1.1.192"/>
    </reaction>
</comment>
<comment type="catalytic activity">
    <reaction evidence="1">
        <text>adenosine(37) in tRNA + 2 reduced [2Fe-2S]-[ferredoxin] + 2 S-adenosyl-L-methionine = 2-methyladenosine(37) in tRNA + 5'-deoxyadenosine + L-methionine + 2 oxidized [2Fe-2S]-[ferredoxin] + S-adenosyl-L-homocysteine</text>
        <dbReference type="Rhea" id="RHEA:43332"/>
        <dbReference type="Rhea" id="RHEA-COMP:10000"/>
        <dbReference type="Rhea" id="RHEA-COMP:10001"/>
        <dbReference type="Rhea" id="RHEA-COMP:10162"/>
        <dbReference type="Rhea" id="RHEA-COMP:10485"/>
        <dbReference type="ChEBI" id="CHEBI:17319"/>
        <dbReference type="ChEBI" id="CHEBI:33737"/>
        <dbReference type="ChEBI" id="CHEBI:33738"/>
        <dbReference type="ChEBI" id="CHEBI:57844"/>
        <dbReference type="ChEBI" id="CHEBI:57856"/>
        <dbReference type="ChEBI" id="CHEBI:59789"/>
        <dbReference type="ChEBI" id="CHEBI:74411"/>
        <dbReference type="ChEBI" id="CHEBI:74497"/>
        <dbReference type="EC" id="2.1.1.192"/>
    </reaction>
</comment>
<comment type="cofactor">
    <cofactor evidence="1">
        <name>[4Fe-4S] cluster</name>
        <dbReference type="ChEBI" id="CHEBI:49883"/>
    </cofactor>
    <text evidence="1">Binds 1 [4Fe-4S] cluster. The cluster is coordinated with 3 cysteines and an exchangeable S-adenosyl-L-methionine.</text>
</comment>
<comment type="subcellular location">
    <subcellularLocation>
        <location evidence="1">Cytoplasm</location>
    </subcellularLocation>
</comment>
<comment type="miscellaneous">
    <text evidence="1">Reaction proceeds by a ping-pong mechanism involving intermediate methylation of a conserved cysteine residue.</text>
</comment>
<comment type="similarity">
    <text evidence="1">Belongs to the radical SAM superfamily. RlmN family.</text>
</comment>
<sequence>MPNPLPLVFDAPRRAKPPRHFADLDATARAAAVAELGLPAFRAKQLATQYYGRLTADPQQMTDLPAAVREQVAEALFPDLLTAVREIETDAGETRKVLWRAVDGTTFESVLMRYSDRNTVCISSQAGCGMACPFCATGQGGLQRNLSTAEILEQVRAAAVELRDRDGEGIAPAARGGRLSNIVFMGMGEPLANYNRVIAAVRRIVAPPPDGFGISARSVTVSTVGLAPAIRKLADERLNVTLALSLHAPDDELRDTLVPVNNRWKVSEALDAARYYADVTGRRVSIEYALIRDVNDQPWRADLLGKRLHGALGPLVHVNVIPLNPTPGSEWDASPKPAEREFVRRVRERGVSCTVRDTRGREIAAACGQLAAEG</sequence>
<proteinExistence type="inferred from homology"/>